<geneLocation type="chloroplast"/>
<comment type="function">
    <text evidence="1">Component of the dark-operative protochlorophyllide reductase (DPOR) that uses Mg-ATP and reduced ferredoxin to reduce ring D of protochlorophyllide (Pchlide) to form chlorophyllide a (Chlide). This reaction is light-independent. The NB-protein (ChlN-ChlB) is the catalytic component of the complex (By similarity).</text>
</comment>
<comment type="catalytic activity">
    <reaction>
        <text>chlorophyllide a + oxidized 2[4Fe-4S]-[ferredoxin] + 2 ADP + 2 phosphate = protochlorophyllide a + reduced 2[4Fe-4S]-[ferredoxin] + 2 ATP + 2 H2O</text>
        <dbReference type="Rhea" id="RHEA:28202"/>
        <dbReference type="Rhea" id="RHEA-COMP:10002"/>
        <dbReference type="Rhea" id="RHEA-COMP:10004"/>
        <dbReference type="ChEBI" id="CHEBI:15377"/>
        <dbReference type="ChEBI" id="CHEBI:30616"/>
        <dbReference type="ChEBI" id="CHEBI:33722"/>
        <dbReference type="ChEBI" id="CHEBI:33723"/>
        <dbReference type="ChEBI" id="CHEBI:43474"/>
        <dbReference type="ChEBI" id="CHEBI:83348"/>
        <dbReference type="ChEBI" id="CHEBI:83350"/>
        <dbReference type="ChEBI" id="CHEBI:456216"/>
        <dbReference type="EC" id="1.3.7.7"/>
    </reaction>
</comment>
<comment type="cofactor">
    <cofactor evidence="1">
        <name>[4Fe-4S] cluster</name>
        <dbReference type="ChEBI" id="CHEBI:49883"/>
    </cofactor>
    <text evidence="1">Binds 1 [4Fe-4S] cluster per heterodimer. The cluster is bound at the heterodimer interface by residues from both subunits.</text>
</comment>
<comment type="pathway">
    <text>Porphyrin-containing compound metabolism; chlorophyll biosynthesis (light-independent).</text>
</comment>
<comment type="subunit">
    <text evidence="1">Protochlorophyllide reductase is composed of three subunits; ChlL, ChlN and ChlB. Forms a heterotetramer of two ChlB and two ChlN subunits (By similarity).</text>
</comment>
<comment type="subcellular location">
    <subcellularLocation>
        <location>Plastid</location>
        <location>Chloroplast</location>
    </subcellularLocation>
</comment>
<comment type="similarity">
    <text evidence="2">Belongs to the ChlB/BchB/BchZ family.</text>
</comment>
<accession>P37848</accession>
<evidence type="ECO:0000250" key="1"/>
<evidence type="ECO:0000305" key="2"/>
<reference key="1">
    <citation type="journal article" date="1996" name="Mol. Phylogenet. Evol.">
        <title>Phylogenetic inferences from chloroplast chlB gene sequences of Nephrolepis exaltata (Filicopsida), Ephedra altissima (Gnetopsida), and diverse land plants.</title>
        <authorList>
            <person name="Boivin R."/>
            <person name="Richard M."/>
            <person name="Beauseigle D."/>
            <person name="Bousquet J."/>
            <person name="Bellemare G."/>
        </authorList>
    </citation>
    <scope>NUCLEOTIDE SEQUENCE [GENOMIC DNA]</scope>
</reference>
<keyword id="KW-0004">4Fe-4S</keyword>
<keyword id="KW-0067">ATP-binding</keyword>
<keyword id="KW-0149">Chlorophyll biosynthesis</keyword>
<keyword id="KW-0150">Chloroplast</keyword>
<keyword id="KW-0408">Iron</keyword>
<keyword id="KW-0411">Iron-sulfur</keyword>
<keyword id="KW-0479">Metal-binding</keyword>
<keyword id="KW-0547">Nucleotide-binding</keyword>
<keyword id="KW-0560">Oxidoreductase</keyword>
<keyword id="KW-0602">Photosynthesis</keyword>
<keyword id="KW-0934">Plastid</keyword>
<feature type="chain" id="PRO_0000219828" description="Light-independent protochlorophyllide reductase subunit B">
    <location>
        <begin position="1" status="less than"/>
        <end position="103" status="greater than"/>
    </location>
</feature>
<feature type="non-terminal residue">
    <location>
        <position position="1"/>
    </location>
</feature>
<feature type="non-terminal residue">
    <location>
        <position position="103"/>
    </location>
</feature>
<proteinExistence type="inferred from homology"/>
<dbReference type="EC" id="1.3.7.7"/>
<dbReference type="EMBL" id="L25768">
    <property type="protein sequence ID" value="AAC37489.1"/>
    <property type="molecule type" value="Genomic_DNA"/>
</dbReference>
<dbReference type="SMR" id="P37848"/>
<dbReference type="UniPathway" id="UPA00670"/>
<dbReference type="GO" id="GO:0009507">
    <property type="term" value="C:chloroplast"/>
    <property type="evidence" value="ECO:0007669"/>
    <property type="project" value="UniProtKB-SubCell"/>
</dbReference>
<dbReference type="GO" id="GO:0051539">
    <property type="term" value="F:4 iron, 4 sulfur cluster binding"/>
    <property type="evidence" value="ECO:0007669"/>
    <property type="project" value="UniProtKB-KW"/>
</dbReference>
<dbReference type="GO" id="GO:0005524">
    <property type="term" value="F:ATP binding"/>
    <property type="evidence" value="ECO:0007669"/>
    <property type="project" value="UniProtKB-KW"/>
</dbReference>
<dbReference type="GO" id="GO:0046872">
    <property type="term" value="F:metal ion binding"/>
    <property type="evidence" value="ECO:0007669"/>
    <property type="project" value="UniProtKB-KW"/>
</dbReference>
<dbReference type="GO" id="GO:0016491">
    <property type="term" value="F:oxidoreductase activity"/>
    <property type="evidence" value="ECO:0007669"/>
    <property type="project" value="UniProtKB-KW"/>
</dbReference>
<dbReference type="GO" id="GO:0036068">
    <property type="term" value="P:light-independent chlorophyll biosynthetic process"/>
    <property type="evidence" value="ECO:0007669"/>
    <property type="project" value="UniProtKB-UniPathway"/>
</dbReference>
<dbReference type="GO" id="GO:0015979">
    <property type="term" value="P:photosynthesis"/>
    <property type="evidence" value="ECO:0007669"/>
    <property type="project" value="UniProtKB-KW"/>
</dbReference>
<dbReference type="Gene3D" id="3.40.50.1980">
    <property type="entry name" value="Nitrogenase molybdenum iron protein domain"/>
    <property type="match status" value="1"/>
</dbReference>
<dbReference type="InterPro" id="IPR050152">
    <property type="entry name" value="ChlB/BchB/BchZ"/>
</dbReference>
<dbReference type="InterPro" id="IPR000510">
    <property type="entry name" value="Nase/OxRdtase_comp1"/>
</dbReference>
<dbReference type="PANTHER" id="PTHR33712">
    <property type="entry name" value="LIGHT-INDEPENDENT PROTOCHLOROPHYLLIDE REDUCTASE SUBUNIT B"/>
    <property type="match status" value="1"/>
</dbReference>
<dbReference type="PANTHER" id="PTHR33712:SF7">
    <property type="entry name" value="LIGHT-INDEPENDENT PROTOCHLOROPHYLLIDE REDUCTASE SUBUNIT B"/>
    <property type="match status" value="1"/>
</dbReference>
<dbReference type="Pfam" id="PF00148">
    <property type="entry name" value="Oxidored_nitro"/>
    <property type="match status" value="1"/>
</dbReference>
<dbReference type="SUPFAM" id="SSF53807">
    <property type="entry name" value="Helical backbone' metal receptor"/>
    <property type="match status" value="1"/>
</dbReference>
<organism>
    <name type="scientific">Diphasiastrum complanatum</name>
    <name type="common">Issler's clubmoss</name>
    <name type="synonym">Lycopodium complanatum</name>
    <dbReference type="NCBI Taxonomy" id="34168"/>
    <lineage>
        <taxon>Eukaryota</taxon>
        <taxon>Viridiplantae</taxon>
        <taxon>Streptophyta</taxon>
        <taxon>Embryophyta</taxon>
        <taxon>Tracheophyta</taxon>
        <taxon>Lycopodiopsida</taxon>
        <taxon>Lycopodiales</taxon>
        <taxon>Lycopodiaceae</taxon>
        <taxon>Lycopodioideae</taxon>
        <taxon>Diphasiastrum</taxon>
    </lineage>
</organism>
<gene>
    <name type="primary">chlB</name>
</gene>
<sequence length="103" mass="11926">KRLLQNLGIEINQVIPEGGFVEDLQNLPKAWFNFVPYREIGLMTAVYLEKEFGMPYVSITPMGIVDTAECIRQIQKHINELAVVSLEETVDYEPYIYQQTKFV</sequence>
<protein>
    <recommendedName>
        <fullName>Light-independent protochlorophyllide reductase subunit B</fullName>
        <shortName>DPOR subunit B</shortName>
        <shortName>LI-POR subunit B</shortName>
        <ecNumber>1.3.7.7</ecNumber>
    </recommendedName>
</protein>
<name>CHLB_DIPCM</name>